<dbReference type="EC" id="6.3.2.1" evidence="1"/>
<dbReference type="EMBL" id="CP000046">
    <property type="protein sequence ID" value="AAW38613.1"/>
    <property type="molecule type" value="Genomic_DNA"/>
</dbReference>
<dbReference type="RefSeq" id="WP_000163735.1">
    <property type="nucleotide sequence ID" value="NZ_JBGOFO010000001.1"/>
</dbReference>
<dbReference type="SMR" id="Q5HCV4"/>
<dbReference type="KEGG" id="sac:SACOL2614"/>
<dbReference type="HOGENOM" id="CLU_047148_0_0_9"/>
<dbReference type="UniPathway" id="UPA00028">
    <property type="reaction ID" value="UER00005"/>
</dbReference>
<dbReference type="Proteomes" id="UP000000530">
    <property type="component" value="Chromosome"/>
</dbReference>
<dbReference type="GO" id="GO:0005829">
    <property type="term" value="C:cytosol"/>
    <property type="evidence" value="ECO:0007669"/>
    <property type="project" value="TreeGrafter"/>
</dbReference>
<dbReference type="GO" id="GO:0005524">
    <property type="term" value="F:ATP binding"/>
    <property type="evidence" value="ECO:0007669"/>
    <property type="project" value="UniProtKB-KW"/>
</dbReference>
<dbReference type="GO" id="GO:0004592">
    <property type="term" value="F:pantoate-beta-alanine ligase activity"/>
    <property type="evidence" value="ECO:0007669"/>
    <property type="project" value="UniProtKB-UniRule"/>
</dbReference>
<dbReference type="GO" id="GO:0015940">
    <property type="term" value="P:pantothenate biosynthetic process"/>
    <property type="evidence" value="ECO:0007669"/>
    <property type="project" value="UniProtKB-UniRule"/>
</dbReference>
<dbReference type="CDD" id="cd00560">
    <property type="entry name" value="PanC"/>
    <property type="match status" value="1"/>
</dbReference>
<dbReference type="FunFam" id="3.30.1300.10:FF:000001">
    <property type="entry name" value="Pantothenate synthetase"/>
    <property type="match status" value="1"/>
</dbReference>
<dbReference type="FunFam" id="3.40.50.620:FF:000013">
    <property type="entry name" value="Pantothenate synthetase"/>
    <property type="match status" value="1"/>
</dbReference>
<dbReference type="Gene3D" id="3.40.50.620">
    <property type="entry name" value="HUPs"/>
    <property type="match status" value="1"/>
</dbReference>
<dbReference type="Gene3D" id="3.30.1300.10">
    <property type="entry name" value="Pantoate-beta-alanine ligase, C-terminal domain"/>
    <property type="match status" value="1"/>
</dbReference>
<dbReference type="HAMAP" id="MF_00158">
    <property type="entry name" value="PanC"/>
    <property type="match status" value="1"/>
</dbReference>
<dbReference type="InterPro" id="IPR003721">
    <property type="entry name" value="Pantoate_ligase"/>
</dbReference>
<dbReference type="InterPro" id="IPR042176">
    <property type="entry name" value="Pantoate_ligase_C"/>
</dbReference>
<dbReference type="InterPro" id="IPR014729">
    <property type="entry name" value="Rossmann-like_a/b/a_fold"/>
</dbReference>
<dbReference type="NCBIfam" id="TIGR00018">
    <property type="entry name" value="panC"/>
    <property type="match status" value="1"/>
</dbReference>
<dbReference type="PANTHER" id="PTHR21299">
    <property type="entry name" value="CYTIDYLATE KINASE/PANTOATE-BETA-ALANINE LIGASE"/>
    <property type="match status" value="1"/>
</dbReference>
<dbReference type="PANTHER" id="PTHR21299:SF1">
    <property type="entry name" value="PANTOATE--BETA-ALANINE LIGASE"/>
    <property type="match status" value="1"/>
</dbReference>
<dbReference type="Pfam" id="PF02569">
    <property type="entry name" value="Pantoate_ligase"/>
    <property type="match status" value="1"/>
</dbReference>
<dbReference type="SUPFAM" id="SSF52374">
    <property type="entry name" value="Nucleotidylyl transferase"/>
    <property type="match status" value="1"/>
</dbReference>
<organism>
    <name type="scientific">Staphylococcus aureus (strain COL)</name>
    <dbReference type="NCBI Taxonomy" id="93062"/>
    <lineage>
        <taxon>Bacteria</taxon>
        <taxon>Bacillati</taxon>
        <taxon>Bacillota</taxon>
        <taxon>Bacilli</taxon>
        <taxon>Bacillales</taxon>
        <taxon>Staphylococcaceae</taxon>
        <taxon>Staphylococcus</taxon>
    </lineage>
</organism>
<comment type="function">
    <text evidence="1">Catalyzes the condensation of pantoate with beta-alanine in an ATP-dependent reaction via a pantoyl-adenylate intermediate.</text>
</comment>
<comment type="catalytic activity">
    <reaction evidence="1">
        <text>(R)-pantoate + beta-alanine + ATP = (R)-pantothenate + AMP + diphosphate + H(+)</text>
        <dbReference type="Rhea" id="RHEA:10912"/>
        <dbReference type="ChEBI" id="CHEBI:15378"/>
        <dbReference type="ChEBI" id="CHEBI:15980"/>
        <dbReference type="ChEBI" id="CHEBI:29032"/>
        <dbReference type="ChEBI" id="CHEBI:30616"/>
        <dbReference type="ChEBI" id="CHEBI:33019"/>
        <dbReference type="ChEBI" id="CHEBI:57966"/>
        <dbReference type="ChEBI" id="CHEBI:456215"/>
        <dbReference type="EC" id="6.3.2.1"/>
    </reaction>
</comment>
<comment type="pathway">
    <text evidence="1">Cofactor biosynthesis; (R)-pantothenate biosynthesis; (R)-pantothenate from (R)-pantoate and beta-alanine: step 1/1.</text>
</comment>
<comment type="subunit">
    <text evidence="1">Homodimer.</text>
</comment>
<comment type="subcellular location">
    <subcellularLocation>
        <location evidence="1">Cytoplasm</location>
    </subcellularLocation>
</comment>
<comment type="miscellaneous">
    <text evidence="1">The reaction proceeds by a bi uni uni bi ping pong mechanism.</text>
</comment>
<comment type="similarity">
    <text evidence="1">Belongs to the pantothenate synthetase family.</text>
</comment>
<keyword id="KW-0067">ATP-binding</keyword>
<keyword id="KW-0963">Cytoplasm</keyword>
<keyword id="KW-0436">Ligase</keyword>
<keyword id="KW-0547">Nucleotide-binding</keyword>
<keyword id="KW-0566">Pantothenate biosynthesis</keyword>
<reference key="1">
    <citation type="journal article" date="2005" name="J. Bacteriol.">
        <title>Insights on evolution of virulence and resistance from the complete genome analysis of an early methicillin-resistant Staphylococcus aureus strain and a biofilm-producing methicillin-resistant Staphylococcus epidermidis strain.</title>
        <authorList>
            <person name="Gill S.R."/>
            <person name="Fouts D.E."/>
            <person name="Archer G.L."/>
            <person name="Mongodin E.F."/>
            <person name="DeBoy R.T."/>
            <person name="Ravel J."/>
            <person name="Paulsen I.T."/>
            <person name="Kolonay J.F."/>
            <person name="Brinkac L.M."/>
            <person name="Beanan M.J."/>
            <person name="Dodson R.J."/>
            <person name="Daugherty S.C."/>
            <person name="Madupu R."/>
            <person name="Angiuoli S.V."/>
            <person name="Durkin A.S."/>
            <person name="Haft D.H."/>
            <person name="Vamathevan J.J."/>
            <person name="Khouri H."/>
            <person name="Utterback T.R."/>
            <person name="Lee C."/>
            <person name="Dimitrov G."/>
            <person name="Jiang L."/>
            <person name="Qin H."/>
            <person name="Weidman J."/>
            <person name="Tran K."/>
            <person name="Kang K.H."/>
            <person name="Hance I.R."/>
            <person name="Nelson K.E."/>
            <person name="Fraser C.M."/>
        </authorList>
    </citation>
    <scope>NUCLEOTIDE SEQUENCE [LARGE SCALE GENOMIC DNA]</scope>
    <source>
        <strain>COL</strain>
    </source>
</reference>
<sequence length="283" mass="31462">MTKLITTVKEMQHIVKAAKRSGTTIGFIPTMGALHDGHLTMVRESVSTNDITIVSVFVNPLQFGPNEDFDAYPRQIDKDLELVSEVGADIVFHPAVEDMYPGELGIDVKVGPLADVLEGAKRPGHFDGVVTVVNKLFNIVMPDYAYFGKKDAQQLAIVEQMVKDFNHAVEIIGIDIVREADGLAKSSRNVYLTEQERQEAVHLSKSLLLAQALYQDGERQSKVIIDRVTEYLESHISGRIEEVAVYSYPQLVEQHEITGRIFISLAVKFSKARLIDNIIIGAE</sequence>
<proteinExistence type="inferred from homology"/>
<name>PANC_STAAC</name>
<accession>Q5HCV4</accession>
<protein>
    <recommendedName>
        <fullName evidence="1">Pantothenate synthetase</fullName>
        <shortName evidence="1">PS</shortName>
        <ecNumber evidence="1">6.3.2.1</ecNumber>
    </recommendedName>
    <alternativeName>
        <fullName evidence="1">Pantoate--beta-alanine ligase</fullName>
    </alternativeName>
    <alternativeName>
        <fullName evidence="1">Pantoate-activating enzyme</fullName>
    </alternativeName>
</protein>
<feature type="chain" id="PRO_0000128269" description="Pantothenate synthetase">
    <location>
        <begin position="1"/>
        <end position="283"/>
    </location>
</feature>
<feature type="active site" description="Proton donor" evidence="1">
    <location>
        <position position="38"/>
    </location>
</feature>
<feature type="binding site" evidence="1">
    <location>
        <begin position="31"/>
        <end position="38"/>
    </location>
    <ligand>
        <name>ATP</name>
        <dbReference type="ChEBI" id="CHEBI:30616"/>
    </ligand>
</feature>
<feature type="binding site" evidence="1">
    <location>
        <position position="62"/>
    </location>
    <ligand>
        <name>(R)-pantoate</name>
        <dbReference type="ChEBI" id="CHEBI:15980"/>
    </ligand>
</feature>
<feature type="binding site" evidence="1">
    <location>
        <position position="62"/>
    </location>
    <ligand>
        <name>beta-alanine</name>
        <dbReference type="ChEBI" id="CHEBI:57966"/>
    </ligand>
</feature>
<feature type="binding site" evidence="1">
    <location>
        <begin position="148"/>
        <end position="151"/>
    </location>
    <ligand>
        <name>ATP</name>
        <dbReference type="ChEBI" id="CHEBI:30616"/>
    </ligand>
</feature>
<feature type="binding site" evidence="1">
    <location>
        <position position="154"/>
    </location>
    <ligand>
        <name>(R)-pantoate</name>
        <dbReference type="ChEBI" id="CHEBI:15980"/>
    </ligand>
</feature>
<feature type="binding site" evidence="1">
    <location>
        <position position="177"/>
    </location>
    <ligand>
        <name>ATP</name>
        <dbReference type="ChEBI" id="CHEBI:30616"/>
    </ligand>
</feature>
<feature type="binding site" evidence="1">
    <location>
        <begin position="185"/>
        <end position="188"/>
    </location>
    <ligand>
        <name>ATP</name>
        <dbReference type="ChEBI" id="CHEBI:30616"/>
    </ligand>
</feature>
<gene>
    <name evidence="1" type="primary">panC</name>
    <name type="ordered locus">SACOL2614</name>
</gene>
<evidence type="ECO:0000255" key="1">
    <source>
        <dbReference type="HAMAP-Rule" id="MF_00158"/>
    </source>
</evidence>